<feature type="chain" id="PRO_1000123443" description="4-hydroxy-3-methylbut-2-en-1-yl diphosphate synthase (ferredoxin)">
    <location>
        <begin position="1"/>
        <end position="407"/>
    </location>
</feature>
<feature type="binding site" evidence="1">
    <location>
        <position position="316"/>
    </location>
    <ligand>
        <name>[4Fe-4S] cluster</name>
        <dbReference type="ChEBI" id="CHEBI:49883"/>
    </ligand>
</feature>
<feature type="binding site" evidence="1">
    <location>
        <position position="319"/>
    </location>
    <ligand>
        <name>[4Fe-4S] cluster</name>
        <dbReference type="ChEBI" id="CHEBI:49883"/>
    </ligand>
</feature>
<feature type="binding site" evidence="1">
    <location>
        <position position="350"/>
    </location>
    <ligand>
        <name>[4Fe-4S] cluster</name>
        <dbReference type="ChEBI" id="CHEBI:49883"/>
    </ligand>
</feature>
<feature type="binding site" evidence="1">
    <location>
        <position position="357"/>
    </location>
    <ligand>
        <name>[4Fe-4S] cluster</name>
        <dbReference type="ChEBI" id="CHEBI:49883"/>
    </ligand>
</feature>
<organism>
    <name type="scientific">Cyanothece sp. (strain PCC 7425 / ATCC 29141)</name>
    <dbReference type="NCBI Taxonomy" id="395961"/>
    <lineage>
        <taxon>Bacteria</taxon>
        <taxon>Bacillati</taxon>
        <taxon>Cyanobacteriota</taxon>
        <taxon>Cyanophyceae</taxon>
        <taxon>Gomontiellales</taxon>
        <taxon>Cyanothecaceae</taxon>
        <taxon>Cyanothece</taxon>
    </lineage>
</organism>
<accession>B8HSI6</accession>
<keyword id="KW-0004">4Fe-4S</keyword>
<keyword id="KW-0408">Iron</keyword>
<keyword id="KW-0411">Iron-sulfur</keyword>
<keyword id="KW-0414">Isoprene biosynthesis</keyword>
<keyword id="KW-0479">Metal-binding</keyword>
<keyword id="KW-0560">Oxidoreductase</keyword>
<evidence type="ECO:0000255" key="1">
    <source>
        <dbReference type="HAMAP-Rule" id="MF_00159"/>
    </source>
</evidence>
<proteinExistence type="inferred from homology"/>
<sequence>MQTLSAPDISSSKPAALTEATIVRRKTRPVPVGSITIGGGNPVVVQSMINEDTLDIEGSVAAIRRLHEIGCEIVRVTVPSMAHAKAMAEIRAKLHRTYKPVPLVADVHHNGLKIALEVANHVDNVRINPGLYVFEKPKADRTEYTQAEFDEIGAKIRETLEPLVLSLKTQNKSMRIGVNHGSLAERMLFTYGDTPEGMVESALEFIRICESLGYYHLEISLKASRVPVMLAANRLMVQRMDELGMDYPLHLGVTEAGDGEYGRIKSTAGIGTLLAEGIGDTIRVSLTEAPEKEIPVCYSILQALGLRKTMVEYVACPSCGRTLFNLEEVLHKVREATKHLTGLDIAVMGCIVNGPGEMADADYGYVGKQAGHISLYRGREEVKKVPEDQGVEELINLIKADGRWVDP</sequence>
<gene>
    <name evidence="1" type="primary">ispG</name>
    <name type="ordered locus">Cyan7425_3649</name>
</gene>
<reference key="1">
    <citation type="journal article" date="2011" name="MBio">
        <title>Novel metabolic attributes of the genus Cyanothece, comprising a group of unicellular nitrogen-fixing Cyanobacteria.</title>
        <authorList>
            <person name="Bandyopadhyay A."/>
            <person name="Elvitigala T."/>
            <person name="Welsh E."/>
            <person name="Stockel J."/>
            <person name="Liberton M."/>
            <person name="Min H."/>
            <person name="Sherman L.A."/>
            <person name="Pakrasi H.B."/>
        </authorList>
    </citation>
    <scope>NUCLEOTIDE SEQUENCE [LARGE SCALE GENOMIC DNA]</scope>
    <source>
        <strain>PCC 7425 / ATCC 29141</strain>
    </source>
</reference>
<comment type="function">
    <text evidence="1">Converts 2C-methyl-D-erythritol 2,4-cyclodiphosphate (ME-2,4cPP) into 1-hydroxy-2-methyl-2-(E)-butenyl 4-diphosphate.</text>
</comment>
<comment type="catalytic activity">
    <reaction evidence="1">
        <text>(2E)-4-hydroxy-3-methylbut-2-enyl diphosphate + 2 oxidized [2Fe-2S]-[ferredoxin] + H2O = 2-C-methyl-D-erythritol 2,4-cyclic diphosphate + 2 reduced [2Fe-2S]-[ferredoxin] + H(+)</text>
        <dbReference type="Rhea" id="RHEA:26119"/>
        <dbReference type="Rhea" id="RHEA-COMP:10000"/>
        <dbReference type="Rhea" id="RHEA-COMP:10001"/>
        <dbReference type="ChEBI" id="CHEBI:15377"/>
        <dbReference type="ChEBI" id="CHEBI:15378"/>
        <dbReference type="ChEBI" id="CHEBI:33737"/>
        <dbReference type="ChEBI" id="CHEBI:33738"/>
        <dbReference type="ChEBI" id="CHEBI:58483"/>
        <dbReference type="ChEBI" id="CHEBI:128753"/>
        <dbReference type="EC" id="1.17.7.1"/>
    </reaction>
</comment>
<comment type="cofactor">
    <cofactor evidence="1">
        <name>[4Fe-4S] cluster</name>
        <dbReference type="ChEBI" id="CHEBI:49883"/>
    </cofactor>
    <text evidence="1">Binds 1 [4Fe-4S] cluster.</text>
</comment>
<comment type="pathway">
    <text evidence="1">Isoprenoid biosynthesis; isopentenyl diphosphate biosynthesis via DXP pathway; isopentenyl diphosphate from 1-deoxy-D-xylulose 5-phosphate: step 5/6.</text>
</comment>
<comment type="similarity">
    <text evidence="1">Belongs to the IspG family.</text>
</comment>
<name>ISPG_CYAP4</name>
<dbReference type="EC" id="1.17.7.1" evidence="1"/>
<dbReference type="EMBL" id="CP001344">
    <property type="protein sequence ID" value="ACL45969.1"/>
    <property type="molecule type" value="Genomic_DNA"/>
</dbReference>
<dbReference type="SMR" id="B8HSI6"/>
<dbReference type="STRING" id="395961.Cyan7425_3649"/>
<dbReference type="KEGG" id="cyn:Cyan7425_3649"/>
<dbReference type="eggNOG" id="COG0821">
    <property type="taxonomic scope" value="Bacteria"/>
</dbReference>
<dbReference type="HOGENOM" id="CLU_042258_0_0_3"/>
<dbReference type="OrthoDB" id="9803214at2"/>
<dbReference type="UniPathway" id="UPA00056">
    <property type="reaction ID" value="UER00096"/>
</dbReference>
<dbReference type="GO" id="GO:0051539">
    <property type="term" value="F:4 iron, 4 sulfur cluster binding"/>
    <property type="evidence" value="ECO:0007669"/>
    <property type="project" value="UniProtKB-UniRule"/>
</dbReference>
<dbReference type="GO" id="GO:0046429">
    <property type="term" value="F:4-hydroxy-3-methylbut-2-en-1-yl diphosphate synthase activity (ferredoxin)"/>
    <property type="evidence" value="ECO:0007669"/>
    <property type="project" value="UniProtKB-UniRule"/>
</dbReference>
<dbReference type="GO" id="GO:0005506">
    <property type="term" value="F:iron ion binding"/>
    <property type="evidence" value="ECO:0007669"/>
    <property type="project" value="InterPro"/>
</dbReference>
<dbReference type="GO" id="GO:0019288">
    <property type="term" value="P:isopentenyl diphosphate biosynthetic process, methylerythritol 4-phosphate pathway"/>
    <property type="evidence" value="ECO:0007669"/>
    <property type="project" value="UniProtKB-UniRule"/>
</dbReference>
<dbReference type="GO" id="GO:0016114">
    <property type="term" value="P:terpenoid biosynthetic process"/>
    <property type="evidence" value="ECO:0007669"/>
    <property type="project" value="InterPro"/>
</dbReference>
<dbReference type="FunFam" id="3.20.20.20:FF:000005">
    <property type="entry name" value="4-hydroxy-3-methylbut-2-en-1-yl diphosphate synthase (flavodoxin)"/>
    <property type="match status" value="1"/>
</dbReference>
<dbReference type="FunFam" id="3.30.413.10:FF:000006">
    <property type="entry name" value="4-hydroxy-3-methylbut-2-en-1-yl diphosphate synthase (flavodoxin)"/>
    <property type="match status" value="1"/>
</dbReference>
<dbReference type="Gene3D" id="3.20.20.20">
    <property type="entry name" value="Dihydropteroate synthase-like"/>
    <property type="match status" value="1"/>
</dbReference>
<dbReference type="Gene3D" id="3.30.413.10">
    <property type="entry name" value="Sulfite Reductase Hemoprotein, domain 1"/>
    <property type="match status" value="1"/>
</dbReference>
<dbReference type="HAMAP" id="MF_00159">
    <property type="entry name" value="IspG"/>
    <property type="match status" value="1"/>
</dbReference>
<dbReference type="InterPro" id="IPR011005">
    <property type="entry name" value="Dihydropteroate_synth-like_sf"/>
</dbReference>
<dbReference type="InterPro" id="IPR016425">
    <property type="entry name" value="IspG_bac"/>
</dbReference>
<dbReference type="InterPro" id="IPR004588">
    <property type="entry name" value="IspG_bac-typ"/>
</dbReference>
<dbReference type="InterPro" id="IPR045854">
    <property type="entry name" value="NO2/SO3_Rdtase_4Fe4S_sf"/>
</dbReference>
<dbReference type="NCBIfam" id="TIGR00612">
    <property type="entry name" value="ispG_gcpE"/>
    <property type="match status" value="1"/>
</dbReference>
<dbReference type="NCBIfam" id="NF001540">
    <property type="entry name" value="PRK00366.1"/>
    <property type="match status" value="1"/>
</dbReference>
<dbReference type="PANTHER" id="PTHR30454">
    <property type="entry name" value="4-HYDROXY-3-METHYLBUT-2-EN-1-YL DIPHOSPHATE SYNTHASE"/>
    <property type="match status" value="1"/>
</dbReference>
<dbReference type="PANTHER" id="PTHR30454:SF0">
    <property type="entry name" value="4-HYDROXY-3-METHYLBUT-2-EN-1-YL DIPHOSPHATE SYNTHASE (FERREDOXIN), CHLOROPLASTIC"/>
    <property type="match status" value="1"/>
</dbReference>
<dbReference type="Pfam" id="PF04551">
    <property type="entry name" value="GcpE"/>
    <property type="match status" value="1"/>
</dbReference>
<dbReference type="PIRSF" id="PIRSF004640">
    <property type="entry name" value="IspG"/>
    <property type="match status" value="1"/>
</dbReference>
<dbReference type="SUPFAM" id="SSF56014">
    <property type="entry name" value="Nitrite and sulphite reductase 4Fe-4S domain-like"/>
    <property type="match status" value="1"/>
</dbReference>
<protein>
    <recommendedName>
        <fullName evidence="1">4-hydroxy-3-methylbut-2-en-1-yl diphosphate synthase (ferredoxin)</fullName>
        <ecNumber evidence="1">1.17.7.1</ecNumber>
    </recommendedName>
    <alternativeName>
        <fullName evidence="1">1-hydroxy-2-methyl-2-(E)-butenyl 4-diphosphate synthase</fullName>
    </alternativeName>
</protein>